<protein>
    <recommendedName>
        <fullName>Radial spoke head 10 homolog B</fullName>
    </recommendedName>
</protein>
<sequence length="731" mass="83127">MARGDNMKSSNKSTPEPTLSKTLVESSTSSLLSESVVEPEDGQDLSSSAVCSASTVSLPPNENQPIGEHDRCRTVPVLHSIIVERYEGEKCGEMFHGEGVAYFQGGHVYKGSFSHGLMHGYGEYIWSDGLKYQGDFKVNVPMGHGTYTWLNGSTYEGEVHQGIRHGVGMYKCVKTLTVYRGQWYLGKRQGQGEMFYNQEATSWYKGEWVNNCREGWGKRCYPSGNVYEGQWRNNVRHGEGTMRWIDLDQQYSGQWINGIQEGKGTHTWFRKRAPSSQYPRMNEYTGDFVQAMRHGQGQFLYASGALYCGQWKYDKKHGQGRYIFENGRVYEGEFSKDCMAEFPAFTPGLSGITTPFPDENDSSKGASQSSSNASPLGSDMVLNIQTLLNRVSEAHREQEFKQVEFAVLRHMGLLREIYSFYSSLGHEQSLDKIFPLTHLQFSRFLLDCRVHQHGVTLAQIYSLINVHSPFTAILPRECISYIIIIAYHICHKDIESSNNILAACFSKLMKQNIIPNAKSVKGHLFCHPVHAAVAMNYSDKSWEIYQALCEAHSVFTVRQFVLMLKDLCLYDNELTVSKLIRTLSVDSPAIHDGTYSNLDLEMSFLEFFEALLGCAELKGQKIQSYDESQTDASLQDHISSLSKEKEQRQSPVLAYQETELNDWMHKTQQFFNQTFLPAYELKVKVEEETFRLRDNTTTRYTEQLELKEKQEQDADGNELCPVTTTSVTSIH</sequence>
<proteinExistence type="evidence at transcript level"/>
<feature type="chain" id="PRO_0000311945" description="Radial spoke head 10 homolog B">
    <location>
        <begin position="1"/>
        <end position="731"/>
    </location>
</feature>
<feature type="repeat" description="MORN 1">
    <location>
        <begin position="86"/>
        <end position="108"/>
    </location>
</feature>
<feature type="repeat" description="MORN 2">
    <location>
        <begin position="109"/>
        <end position="131"/>
    </location>
</feature>
<feature type="repeat" description="MORN 3">
    <location>
        <begin position="132"/>
        <end position="154"/>
    </location>
</feature>
<feature type="repeat" description="MORN 4">
    <location>
        <begin position="155"/>
        <end position="177"/>
    </location>
</feature>
<feature type="repeat" description="MORN 5">
    <location>
        <begin position="179"/>
        <end position="201"/>
    </location>
</feature>
<feature type="repeat" description="MORN 6">
    <location>
        <begin position="204"/>
        <end position="226"/>
    </location>
</feature>
<feature type="repeat" description="MORN 7">
    <location>
        <begin position="227"/>
        <end position="249"/>
    </location>
</feature>
<feature type="repeat" description="MORN 8">
    <location>
        <begin position="251"/>
        <end position="273"/>
    </location>
</feature>
<feature type="repeat" description="MORN 9">
    <location>
        <begin position="284"/>
        <end position="306"/>
    </location>
</feature>
<feature type="repeat" description="MORN 10">
    <location>
        <begin position="307"/>
        <end position="329"/>
    </location>
</feature>
<feature type="region of interest" description="Disordered" evidence="3">
    <location>
        <begin position="1"/>
        <end position="69"/>
    </location>
</feature>
<feature type="region of interest" description="Disordered" evidence="3">
    <location>
        <begin position="353"/>
        <end position="377"/>
    </location>
</feature>
<feature type="region of interest" description="Disordered" evidence="3">
    <location>
        <begin position="709"/>
        <end position="731"/>
    </location>
</feature>
<feature type="compositionally biased region" description="Polar residues" evidence="3">
    <location>
        <begin position="7"/>
        <end position="17"/>
    </location>
</feature>
<feature type="compositionally biased region" description="Low complexity" evidence="3">
    <location>
        <begin position="18"/>
        <end position="36"/>
    </location>
</feature>
<feature type="compositionally biased region" description="Low complexity" evidence="3">
    <location>
        <begin position="46"/>
        <end position="57"/>
    </location>
</feature>
<feature type="compositionally biased region" description="Low complexity" evidence="3">
    <location>
        <begin position="363"/>
        <end position="377"/>
    </location>
</feature>
<feature type="compositionally biased region" description="Polar residues" evidence="3">
    <location>
        <begin position="722"/>
        <end position="731"/>
    </location>
</feature>
<keyword id="KW-0966">Cell projection</keyword>
<keyword id="KW-0969">Cilium</keyword>
<keyword id="KW-0963">Cytoplasm</keyword>
<keyword id="KW-0206">Cytoskeleton</keyword>
<keyword id="KW-0282">Flagellum</keyword>
<keyword id="KW-1185">Reference proteome</keyword>
<keyword id="KW-0677">Repeat</keyword>
<gene>
    <name type="primary">rsph10b</name>
    <name type="ORF">zgc:153062</name>
</gene>
<reference key="1">
    <citation type="submission" date="2006-09" db="EMBL/GenBank/DDBJ databases">
        <authorList>
            <consortium name="NIH - Zebrafish Gene Collection (ZGC) project"/>
        </authorList>
    </citation>
    <scope>NUCLEOTIDE SEQUENCE [LARGE SCALE MRNA]</scope>
    <source>
        <tissue>Olfactory epithelium</tissue>
    </source>
</reference>
<comment type="function">
    <text evidence="1">May function as part of axonemal radial spoke complexes. Radial spoke complexes are important for ciliary motility.</text>
</comment>
<comment type="subcellular location">
    <subcellularLocation>
        <location evidence="1">Cytoplasm</location>
        <location evidence="1">Cytoskeleton</location>
        <location evidence="1">Cilium axoneme</location>
    </subcellularLocation>
    <subcellularLocation>
        <location evidence="2">Cell projection</location>
        <location evidence="2">Cilium</location>
    </subcellularLocation>
    <subcellularLocation>
        <location evidence="2">Cell projection</location>
        <location evidence="2">Cilium</location>
        <location evidence="2">Flagellum</location>
    </subcellularLocation>
</comment>
<accession>Q08CH7</accession>
<dbReference type="EMBL" id="BC124234">
    <property type="protein sequence ID" value="AAI24235.1"/>
    <property type="molecule type" value="mRNA"/>
</dbReference>
<dbReference type="RefSeq" id="NP_001070227.1">
    <property type="nucleotide sequence ID" value="NM_001076759.2"/>
</dbReference>
<dbReference type="SMR" id="Q08CH7"/>
<dbReference type="FunCoup" id="Q08CH7">
    <property type="interactions" value="551"/>
</dbReference>
<dbReference type="STRING" id="7955.ENSDARP00000068089"/>
<dbReference type="PaxDb" id="7955-ENSDARP00000068089"/>
<dbReference type="GeneID" id="767792"/>
<dbReference type="KEGG" id="dre:767792"/>
<dbReference type="AGR" id="ZFIN:ZDB-GENE-060929-300"/>
<dbReference type="CTD" id="222967"/>
<dbReference type="ZFIN" id="ZDB-GENE-060929-300">
    <property type="gene designation" value="rsph10b"/>
</dbReference>
<dbReference type="eggNOG" id="KOG0231">
    <property type="taxonomic scope" value="Eukaryota"/>
</dbReference>
<dbReference type="InParanoid" id="Q08CH7"/>
<dbReference type="OrthoDB" id="294378at2759"/>
<dbReference type="PhylomeDB" id="Q08CH7"/>
<dbReference type="PRO" id="PR:Q08CH7"/>
<dbReference type="Proteomes" id="UP000000437">
    <property type="component" value="Alternate scaffold 12"/>
</dbReference>
<dbReference type="Proteomes" id="UP000000437">
    <property type="component" value="Chromosome 12"/>
</dbReference>
<dbReference type="GO" id="GO:0097729">
    <property type="term" value="C:9+2 motile cilium"/>
    <property type="evidence" value="ECO:0000250"/>
    <property type="project" value="UniProtKB"/>
</dbReference>
<dbReference type="GO" id="GO:0005929">
    <property type="term" value="C:cilium"/>
    <property type="evidence" value="ECO:0000250"/>
    <property type="project" value="UniProtKB"/>
</dbReference>
<dbReference type="GO" id="GO:0005737">
    <property type="term" value="C:cytoplasm"/>
    <property type="evidence" value="ECO:0007669"/>
    <property type="project" value="UniProtKB-KW"/>
</dbReference>
<dbReference type="GO" id="GO:0005856">
    <property type="term" value="C:cytoskeleton"/>
    <property type="evidence" value="ECO:0007669"/>
    <property type="project" value="UniProtKB-KW"/>
</dbReference>
<dbReference type="GO" id="GO:0036126">
    <property type="term" value="C:sperm flagellum"/>
    <property type="evidence" value="ECO:0000250"/>
    <property type="project" value="UniProtKB"/>
</dbReference>
<dbReference type="Gene3D" id="2.20.110.10">
    <property type="entry name" value="Histone H3 K4-specific methyltransferase SET7/9 N-terminal domain"/>
    <property type="match status" value="4"/>
</dbReference>
<dbReference type="InterPro" id="IPR003409">
    <property type="entry name" value="MORN"/>
</dbReference>
<dbReference type="PANTHER" id="PTHR46613">
    <property type="entry name" value="RADIAL SPOKE HEAD 10 HOMOLOG B-RELATED"/>
    <property type="match status" value="1"/>
</dbReference>
<dbReference type="PANTHER" id="PTHR46613:SF1">
    <property type="entry name" value="RADIAL SPOKE HEAD 10 HOMOLOG B-RELATED"/>
    <property type="match status" value="1"/>
</dbReference>
<dbReference type="Pfam" id="PF02493">
    <property type="entry name" value="MORN"/>
    <property type="match status" value="9"/>
</dbReference>
<dbReference type="SMART" id="SM00698">
    <property type="entry name" value="MORN"/>
    <property type="match status" value="10"/>
</dbReference>
<dbReference type="SUPFAM" id="SSF82185">
    <property type="entry name" value="Histone H3 K4-specific methyltransferase SET7/9 N-terminal domain"/>
    <property type="match status" value="3"/>
</dbReference>
<organism>
    <name type="scientific">Danio rerio</name>
    <name type="common">Zebrafish</name>
    <name type="synonym">Brachydanio rerio</name>
    <dbReference type="NCBI Taxonomy" id="7955"/>
    <lineage>
        <taxon>Eukaryota</taxon>
        <taxon>Metazoa</taxon>
        <taxon>Chordata</taxon>
        <taxon>Craniata</taxon>
        <taxon>Vertebrata</taxon>
        <taxon>Euteleostomi</taxon>
        <taxon>Actinopterygii</taxon>
        <taxon>Neopterygii</taxon>
        <taxon>Teleostei</taxon>
        <taxon>Ostariophysi</taxon>
        <taxon>Cypriniformes</taxon>
        <taxon>Danionidae</taxon>
        <taxon>Danioninae</taxon>
        <taxon>Danio</taxon>
    </lineage>
</organism>
<evidence type="ECO:0000250" key="1">
    <source>
        <dbReference type="UniProtKB" id="E9PYQ0"/>
    </source>
</evidence>
<evidence type="ECO:0000250" key="2">
    <source>
        <dbReference type="UniProtKB" id="P0C881"/>
    </source>
</evidence>
<evidence type="ECO:0000256" key="3">
    <source>
        <dbReference type="SAM" id="MobiDB-lite"/>
    </source>
</evidence>
<name>RS10B_DANRE</name>